<sequence>MRVREPAVAGTFYPKDKEELNKLMDLLCGFEPKEKIKPKAILVPHAGYIYSGKTACEVYKRIEIPEKVVLLGPNHTGLGKPISVYSGDAWETPYGVVEIDGELREKILKYPYANPDEYAHLYEHSLEVQLPFLQRYARREFKILPIVVTFVEYEVAKDFGRFLGEVLKEEDALIVISSDMSHYVPAEEARKKDEILISAMERLNTEELYFKAVQYNITMCGVVPAVVGIESAKVLGATKGIVVDYSNSGDTTGDYSQVVAYLGMIFL</sequence>
<organism>
    <name type="scientific">Aquifex aeolicus (strain VF5)</name>
    <dbReference type="NCBI Taxonomy" id="224324"/>
    <lineage>
        <taxon>Bacteria</taxon>
        <taxon>Pseudomonadati</taxon>
        <taxon>Aquificota</taxon>
        <taxon>Aquificia</taxon>
        <taxon>Aquificales</taxon>
        <taxon>Aquificaceae</taxon>
        <taxon>Aquifex</taxon>
    </lineage>
</organism>
<feature type="chain" id="PRO_0000134372" description="MEMO1 family protein aq_890">
    <location>
        <begin position="1"/>
        <end position="267"/>
    </location>
</feature>
<reference key="1">
    <citation type="journal article" date="1998" name="Nature">
        <title>The complete genome of the hyperthermophilic bacterium Aquifex aeolicus.</title>
        <authorList>
            <person name="Deckert G."/>
            <person name="Warren P.V."/>
            <person name="Gaasterland T."/>
            <person name="Young W.G."/>
            <person name="Lenox A.L."/>
            <person name="Graham D.E."/>
            <person name="Overbeek R."/>
            <person name="Snead M.A."/>
            <person name="Keller M."/>
            <person name="Aujay M."/>
            <person name="Huber R."/>
            <person name="Feldman R.A."/>
            <person name="Short J.M."/>
            <person name="Olsen G.J."/>
            <person name="Swanson R.V."/>
        </authorList>
    </citation>
    <scope>NUCLEOTIDE SEQUENCE [LARGE SCALE GENOMIC DNA]</scope>
    <source>
        <strain>VF5</strain>
    </source>
</reference>
<dbReference type="EMBL" id="AE000657">
    <property type="protein sequence ID" value="AAC07005.1"/>
    <property type="molecule type" value="Genomic_DNA"/>
</dbReference>
<dbReference type="PIR" id="D70376">
    <property type="entry name" value="D70376"/>
</dbReference>
<dbReference type="RefSeq" id="NP_213601.1">
    <property type="nucleotide sequence ID" value="NC_000918.1"/>
</dbReference>
<dbReference type="RefSeq" id="WP_010880539.1">
    <property type="nucleotide sequence ID" value="NC_000918.1"/>
</dbReference>
<dbReference type="SMR" id="O67039"/>
<dbReference type="STRING" id="224324.aq_890"/>
<dbReference type="EnsemblBacteria" id="AAC07005">
    <property type="protein sequence ID" value="AAC07005"/>
    <property type="gene ID" value="aq_890"/>
</dbReference>
<dbReference type="KEGG" id="aae:aq_890"/>
<dbReference type="PATRIC" id="fig|224324.8.peg.691"/>
<dbReference type="eggNOG" id="COG1355">
    <property type="taxonomic scope" value="Bacteria"/>
</dbReference>
<dbReference type="HOGENOM" id="CLU_038085_2_0_0"/>
<dbReference type="InParanoid" id="O67039"/>
<dbReference type="OrthoDB" id="9785549at2"/>
<dbReference type="Proteomes" id="UP000000798">
    <property type="component" value="Chromosome"/>
</dbReference>
<dbReference type="CDD" id="cd07361">
    <property type="entry name" value="MEMO_like"/>
    <property type="match status" value="1"/>
</dbReference>
<dbReference type="Gene3D" id="3.40.830.10">
    <property type="entry name" value="LigB-like"/>
    <property type="match status" value="1"/>
</dbReference>
<dbReference type="HAMAP" id="MF_00055">
    <property type="entry name" value="MEMO1"/>
    <property type="match status" value="1"/>
</dbReference>
<dbReference type="InterPro" id="IPR002737">
    <property type="entry name" value="MEMO1_fam"/>
</dbReference>
<dbReference type="NCBIfam" id="TIGR04336">
    <property type="entry name" value="AmmeMemoSam_B"/>
    <property type="match status" value="1"/>
</dbReference>
<dbReference type="PANTHER" id="PTHR11060">
    <property type="entry name" value="PROTEIN MEMO1"/>
    <property type="match status" value="1"/>
</dbReference>
<dbReference type="PANTHER" id="PTHR11060:SF0">
    <property type="entry name" value="PROTEIN MEMO1"/>
    <property type="match status" value="1"/>
</dbReference>
<dbReference type="Pfam" id="PF01875">
    <property type="entry name" value="Memo"/>
    <property type="match status" value="1"/>
</dbReference>
<dbReference type="SUPFAM" id="SSF53213">
    <property type="entry name" value="LigB-like"/>
    <property type="match status" value="1"/>
</dbReference>
<evidence type="ECO:0000255" key="1">
    <source>
        <dbReference type="HAMAP-Rule" id="MF_00055"/>
    </source>
</evidence>
<comment type="similarity">
    <text evidence="1">Belongs to the MEMO1 family.</text>
</comment>
<name>Y890_AQUAE</name>
<keyword id="KW-1185">Reference proteome</keyword>
<protein>
    <recommendedName>
        <fullName evidence="1">MEMO1 family protein aq_890</fullName>
    </recommendedName>
</protein>
<gene>
    <name type="ordered locus">aq_890</name>
</gene>
<proteinExistence type="inferred from homology"/>
<accession>O67039</accession>